<organism>
    <name type="scientific">Porphyromonas gingivalis (strain ATCC BAA-308 / W83)</name>
    <dbReference type="NCBI Taxonomy" id="242619"/>
    <lineage>
        <taxon>Bacteria</taxon>
        <taxon>Pseudomonadati</taxon>
        <taxon>Bacteroidota</taxon>
        <taxon>Bacteroidia</taxon>
        <taxon>Bacteroidales</taxon>
        <taxon>Porphyromonadaceae</taxon>
        <taxon>Porphyromonas</taxon>
    </lineage>
</organism>
<comment type="function">
    <text evidence="1">Catalyzes the formation of 4-diphosphocytidyl-2-C-methyl-D-erythritol from CTP and 2-C-methyl-D-erythritol 4-phosphate (MEP).</text>
</comment>
<comment type="catalytic activity">
    <reaction evidence="1">
        <text>2-C-methyl-D-erythritol 4-phosphate + CTP + H(+) = 4-CDP-2-C-methyl-D-erythritol + diphosphate</text>
        <dbReference type="Rhea" id="RHEA:13429"/>
        <dbReference type="ChEBI" id="CHEBI:15378"/>
        <dbReference type="ChEBI" id="CHEBI:33019"/>
        <dbReference type="ChEBI" id="CHEBI:37563"/>
        <dbReference type="ChEBI" id="CHEBI:57823"/>
        <dbReference type="ChEBI" id="CHEBI:58262"/>
        <dbReference type="EC" id="2.7.7.60"/>
    </reaction>
</comment>
<comment type="pathway">
    <text evidence="1">Isoprenoid biosynthesis; isopentenyl diphosphate biosynthesis via DXP pathway; isopentenyl diphosphate from 1-deoxy-D-xylulose 5-phosphate: step 2/6.</text>
</comment>
<comment type="similarity">
    <text evidence="1">Belongs to the IspD/TarI cytidylyltransferase family. IspD subfamily.</text>
</comment>
<accession>Q7MUQ9</accession>
<evidence type="ECO:0000255" key="1">
    <source>
        <dbReference type="HAMAP-Rule" id="MF_00108"/>
    </source>
</evidence>
<protein>
    <recommendedName>
        <fullName evidence="1">2-C-methyl-D-erythritol 4-phosphate cytidylyltransferase</fullName>
        <ecNumber evidence="1">2.7.7.60</ecNumber>
    </recommendedName>
    <alternativeName>
        <fullName evidence="1">4-diphosphocytidyl-2C-methyl-D-erythritol synthase</fullName>
    </alternativeName>
    <alternativeName>
        <fullName evidence="1">MEP cytidylyltransferase</fullName>
        <shortName evidence="1">MCT</shortName>
    </alternativeName>
</protein>
<keyword id="KW-0414">Isoprene biosynthesis</keyword>
<keyword id="KW-0548">Nucleotidyltransferase</keyword>
<keyword id="KW-1185">Reference proteome</keyword>
<keyword id="KW-0808">Transferase</keyword>
<name>ISPD_PORGI</name>
<reference key="1">
    <citation type="journal article" date="2003" name="J. Bacteriol.">
        <title>Complete genome sequence of the oral pathogenic bacterium Porphyromonas gingivalis strain W83.</title>
        <authorList>
            <person name="Nelson K.E."/>
            <person name="Fleischmann R.D."/>
            <person name="DeBoy R.T."/>
            <person name="Paulsen I.T."/>
            <person name="Fouts D.E."/>
            <person name="Eisen J.A."/>
            <person name="Daugherty S.C."/>
            <person name="Dodson R.J."/>
            <person name="Durkin A.S."/>
            <person name="Gwinn M.L."/>
            <person name="Haft D.H."/>
            <person name="Kolonay J.F."/>
            <person name="Nelson W.C."/>
            <person name="Mason T.M."/>
            <person name="Tallon L."/>
            <person name="Gray J."/>
            <person name="Granger D."/>
            <person name="Tettelin H."/>
            <person name="Dong H."/>
            <person name="Galvin J.L."/>
            <person name="Duncan M.J."/>
            <person name="Dewhirst F.E."/>
            <person name="Fraser C.M."/>
        </authorList>
    </citation>
    <scope>NUCLEOTIDE SEQUENCE [LARGE SCALE GENOMIC DNA]</scope>
    <source>
        <strain>ATCC BAA-308 / W83</strain>
    </source>
</reference>
<feature type="chain" id="PRO_0000075600" description="2-C-methyl-D-erythritol 4-phosphate cytidylyltransferase">
    <location>
        <begin position="1"/>
        <end position="222"/>
    </location>
</feature>
<feature type="site" description="Transition state stabilizer" evidence="1">
    <location>
        <position position="17"/>
    </location>
</feature>
<feature type="site" description="Transition state stabilizer" evidence="1">
    <location>
        <position position="24"/>
    </location>
</feature>
<feature type="site" description="Positions MEP for the nucleophilic attack" evidence="1">
    <location>
        <position position="151"/>
    </location>
</feature>
<feature type="site" description="Positions MEP for the nucleophilic attack" evidence="1">
    <location>
        <position position="206"/>
    </location>
</feature>
<dbReference type="EC" id="2.7.7.60" evidence="1"/>
<dbReference type="EMBL" id="AE015924">
    <property type="protein sequence ID" value="AAQ66487.1"/>
    <property type="molecule type" value="Genomic_DNA"/>
</dbReference>
<dbReference type="RefSeq" id="WP_005873783.1">
    <property type="nucleotide sequence ID" value="NC_002950.2"/>
</dbReference>
<dbReference type="SMR" id="Q7MUQ9"/>
<dbReference type="STRING" id="242619.PG_1434"/>
<dbReference type="EnsemblBacteria" id="AAQ66487">
    <property type="protein sequence ID" value="AAQ66487"/>
    <property type="gene ID" value="PG_1434"/>
</dbReference>
<dbReference type="KEGG" id="pgi:PG_1434"/>
<dbReference type="PATRIC" id="fig|242619.8.peg.1332"/>
<dbReference type="eggNOG" id="COG1211">
    <property type="taxonomic scope" value="Bacteria"/>
</dbReference>
<dbReference type="HOGENOM" id="CLU_061281_2_2_10"/>
<dbReference type="BioCyc" id="PGIN242619:G1G02-1334-MONOMER"/>
<dbReference type="UniPathway" id="UPA00056">
    <property type="reaction ID" value="UER00093"/>
</dbReference>
<dbReference type="Proteomes" id="UP000000588">
    <property type="component" value="Chromosome"/>
</dbReference>
<dbReference type="GO" id="GO:0050518">
    <property type="term" value="F:2-C-methyl-D-erythritol 4-phosphate cytidylyltransferase activity"/>
    <property type="evidence" value="ECO:0007669"/>
    <property type="project" value="UniProtKB-UniRule"/>
</dbReference>
<dbReference type="GO" id="GO:0019288">
    <property type="term" value="P:isopentenyl diphosphate biosynthetic process, methylerythritol 4-phosphate pathway"/>
    <property type="evidence" value="ECO:0007669"/>
    <property type="project" value="UniProtKB-UniRule"/>
</dbReference>
<dbReference type="CDD" id="cd02516">
    <property type="entry name" value="CDP-ME_synthetase"/>
    <property type="match status" value="1"/>
</dbReference>
<dbReference type="FunFam" id="3.90.550.10:FF:000003">
    <property type="entry name" value="2-C-methyl-D-erythritol 4-phosphate cytidylyltransferase"/>
    <property type="match status" value="1"/>
</dbReference>
<dbReference type="Gene3D" id="3.90.550.10">
    <property type="entry name" value="Spore Coat Polysaccharide Biosynthesis Protein SpsA, Chain A"/>
    <property type="match status" value="1"/>
</dbReference>
<dbReference type="HAMAP" id="MF_00108">
    <property type="entry name" value="IspD"/>
    <property type="match status" value="1"/>
</dbReference>
<dbReference type="InterPro" id="IPR001228">
    <property type="entry name" value="IspD"/>
</dbReference>
<dbReference type="InterPro" id="IPR034683">
    <property type="entry name" value="IspD/TarI"/>
</dbReference>
<dbReference type="InterPro" id="IPR050088">
    <property type="entry name" value="IspD/TarI_cytidylyltransf_bact"/>
</dbReference>
<dbReference type="InterPro" id="IPR029044">
    <property type="entry name" value="Nucleotide-diphossugar_trans"/>
</dbReference>
<dbReference type="NCBIfam" id="NF001186">
    <property type="entry name" value="PRK00155.2-3"/>
    <property type="match status" value="1"/>
</dbReference>
<dbReference type="PANTHER" id="PTHR32125">
    <property type="entry name" value="2-C-METHYL-D-ERYTHRITOL 4-PHOSPHATE CYTIDYLYLTRANSFERASE, CHLOROPLASTIC"/>
    <property type="match status" value="1"/>
</dbReference>
<dbReference type="PANTHER" id="PTHR32125:SF4">
    <property type="entry name" value="2-C-METHYL-D-ERYTHRITOL 4-PHOSPHATE CYTIDYLYLTRANSFERASE, CHLOROPLASTIC"/>
    <property type="match status" value="1"/>
</dbReference>
<dbReference type="Pfam" id="PF01128">
    <property type="entry name" value="IspD"/>
    <property type="match status" value="1"/>
</dbReference>
<dbReference type="SUPFAM" id="SSF53448">
    <property type="entry name" value="Nucleotide-diphospho-sugar transferases"/>
    <property type="match status" value="1"/>
</dbReference>
<proteinExistence type="inferred from homology"/>
<gene>
    <name evidence="1" type="primary">ispD</name>
    <name type="ordered locus">PG_1434</name>
</gene>
<sequence length="222" mass="24929">MEQKRYALIVAGGHGLRMGADRPKQFLLLAGLPVLMHTLNRFAPHVDAIVLVLPTDHHAYWQELCRKYDFSVSHRVVAGGNTRFASVRNGLQVVPDGVLVAVHDGVRPLVSAETIDACFDLAELKGAVAPCRPMTESLRYYATDGNYAVDRSRYVTVQTPQTFRSEWLREAYRQPYEEYFTDDCSVYEHHFGRPVALIVGNIENIKLTTPLDLSLAKLLLTS</sequence>